<gene>
    <name evidence="6" type="primary">Plpp4</name>
</gene>
<keyword id="KW-0378">Hydrolase</keyword>
<keyword id="KW-0443">Lipid metabolism</keyword>
<keyword id="KW-0472">Membrane</keyword>
<keyword id="KW-1185">Reference proteome</keyword>
<keyword id="KW-0812">Transmembrane</keyword>
<keyword id="KW-1133">Transmembrane helix</keyword>
<protein>
    <recommendedName>
        <fullName evidence="2">Phospholipid phosphatase 4</fullName>
        <ecNumber evidence="2">3.1.3.4</ecNumber>
        <ecNumber evidence="2">3.6.1.75</ecNumber>
    </recommendedName>
</protein>
<feature type="chain" id="PRO_0000286944" description="Phospholipid phosphatase 4">
    <location>
        <begin position="1"/>
        <end position="271"/>
    </location>
</feature>
<feature type="transmembrane region" description="Helical" evidence="3">
    <location>
        <begin position="4"/>
        <end position="24"/>
    </location>
</feature>
<feature type="transmembrane region" description="Helical" evidence="3">
    <location>
        <begin position="49"/>
        <end position="69"/>
    </location>
</feature>
<feature type="transmembrane region" description="Helical" evidence="3">
    <location>
        <begin position="84"/>
        <end position="104"/>
    </location>
</feature>
<feature type="transmembrane region" description="Helical" evidence="3">
    <location>
        <begin position="142"/>
        <end position="162"/>
    </location>
</feature>
<feature type="transmembrane region" description="Helical" evidence="3">
    <location>
        <begin position="179"/>
        <end position="199"/>
    </location>
</feature>
<feature type="transmembrane region" description="Helical" evidence="3">
    <location>
        <begin position="202"/>
        <end position="222"/>
    </location>
</feature>
<feature type="region of interest" description="Phosphatase sequence motif I" evidence="2">
    <location>
        <begin position="102"/>
        <end position="110"/>
    </location>
</feature>
<feature type="region of interest" description="Phosphatase sequence motif II" evidence="2">
    <location>
        <begin position="143"/>
        <end position="146"/>
    </location>
</feature>
<feature type="region of interest" description="Phosphatase sequence motif III" evidence="2">
    <location>
        <begin position="195"/>
        <end position="205"/>
    </location>
</feature>
<feature type="region of interest" description="Disordered" evidence="4">
    <location>
        <begin position="249"/>
        <end position="271"/>
    </location>
</feature>
<feature type="active site" description="Proton donors" evidence="1">
    <location>
        <position position="146"/>
    </location>
</feature>
<feature type="active site" description="Nucleophile" evidence="1">
    <location>
        <position position="202"/>
    </location>
</feature>
<feature type="site" description="Stabilizes the active site histidine for nucleophilic attack" evidence="1">
    <location>
        <position position="206"/>
    </location>
</feature>
<organism>
    <name type="scientific">Mus musculus</name>
    <name type="common">Mouse</name>
    <dbReference type="NCBI Taxonomy" id="10090"/>
    <lineage>
        <taxon>Eukaryota</taxon>
        <taxon>Metazoa</taxon>
        <taxon>Chordata</taxon>
        <taxon>Craniata</taxon>
        <taxon>Vertebrata</taxon>
        <taxon>Euteleostomi</taxon>
        <taxon>Mammalia</taxon>
        <taxon>Eutheria</taxon>
        <taxon>Euarchontoglires</taxon>
        <taxon>Glires</taxon>
        <taxon>Rodentia</taxon>
        <taxon>Myomorpha</taxon>
        <taxon>Muroidea</taxon>
        <taxon>Muridae</taxon>
        <taxon>Murinae</taxon>
        <taxon>Mus</taxon>
        <taxon>Mus</taxon>
    </lineage>
</organism>
<reference key="1">
    <citation type="journal article" date="2004" name="Genome Res.">
        <title>The status, quality, and expansion of the NIH full-length cDNA project: the Mammalian Gene Collection (MGC).</title>
        <authorList>
            <consortium name="The MGC Project Team"/>
        </authorList>
    </citation>
    <scope>NUCLEOTIDE SEQUENCE [LARGE SCALE MRNA]</scope>
    <source>
        <tissue>Brain</tissue>
    </source>
</reference>
<accession>Q0VBU9</accession>
<proteinExistence type="evidence at transcript level"/>
<dbReference type="EC" id="3.1.3.4" evidence="2"/>
<dbReference type="EC" id="3.6.1.75" evidence="2"/>
<dbReference type="EMBL" id="BC120497">
    <property type="protein sequence ID" value="AAI20498.1"/>
    <property type="molecule type" value="mRNA"/>
</dbReference>
<dbReference type="CCDS" id="CCDS40154.1"/>
<dbReference type="RefSeq" id="NP_001074432.1">
    <property type="nucleotide sequence ID" value="NM_001080963.2"/>
</dbReference>
<dbReference type="FunCoup" id="Q0VBU9">
    <property type="interactions" value="143"/>
</dbReference>
<dbReference type="STRING" id="10090.ENSMUSP00000091557"/>
<dbReference type="iPTMnet" id="Q0VBU9"/>
<dbReference type="PhosphoSitePlus" id="Q0VBU9"/>
<dbReference type="PaxDb" id="10090-ENSMUSP00000091557"/>
<dbReference type="ProteomicsDB" id="289451"/>
<dbReference type="Antibodypedia" id="46311">
    <property type="antibodies" value="75 antibodies from 19 providers"/>
</dbReference>
<dbReference type="DNASU" id="381925"/>
<dbReference type="Ensembl" id="ENSMUST00000094018.6">
    <property type="protein sequence ID" value="ENSMUSP00000091557.5"/>
    <property type="gene ID" value="ENSMUSG00000070366.6"/>
</dbReference>
<dbReference type="GeneID" id="381925"/>
<dbReference type="KEGG" id="mmu:381925"/>
<dbReference type="UCSC" id="uc009jzl.1">
    <property type="organism name" value="mouse"/>
</dbReference>
<dbReference type="AGR" id="MGI:2685936"/>
<dbReference type="CTD" id="196051"/>
<dbReference type="MGI" id="MGI:2685936">
    <property type="gene designation" value="Plpp4"/>
</dbReference>
<dbReference type="VEuPathDB" id="HostDB:ENSMUSG00000070366"/>
<dbReference type="eggNOG" id="KOG3030">
    <property type="taxonomic scope" value="Eukaryota"/>
</dbReference>
<dbReference type="GeneTree" id="ENSGT00940000158288"/>
<dbReference type="HOGENOM" id="CLU_021458_5_4_1"/>
<dbReference type="InParanoid" id="Q0VBU9"/>
<dbReference type="OMA" id="WFSYRRY"/>
<dbReference type="OrthoDB" id="10030083at2759"/>
<dbReference type="PhylomeDB" id="Q0VBU9"/>
<dbReference type="TreeFam" id="TF323722"/>
<dbReference type="Reactome" id="R-MMU-2029485">
    <property type="pathway name" value="Role of phospholipids in phagocytosis"/>
</dbReference>
<dbReference type="UniPathway" id="UPA00085"/>
<dbReference type="BioGRID-ORCS" id="381925">
    <property type="hits" value="1 hit in 46 CRISPR screens"/>
</dbReference>
<dbReference type="ChiTaRS" id="Plpp4">
    <property type="organism name" value="mouse"/>
</dbReference>
<dbReference type="PRO" id="PR:Q0VBU9"/>
<dbReference type="Proteomes" id="UP000000589">
    <property type="component" value="Chromosome 7"/>
</dbReference>
<dbReference type="RNAct" id="Q0VBU9">
    <property type="molecule type" value="protein"/>
</dbReference>
<dbReference type="Bgee" id="ENSMUSG00000070366">
    <property type="expression patterns" value="Expressed in olfactory bulb and 37 other cell types or tissues"/>
</dbReference>
<dbReference type="ExpressionAtlas" id="Q0VBU9">
    <property type="expression patterns" value="baseline and differential"/>
</dbReference>
<dbReference type="GO" id="GO:0016020">
    <property type="term" value="C:membrane"/>
    <property type="evidence" value="ECO:0007669"/>
    <property type="project" value="UniProtKB-SubCell"/>
</dbReference>
<dbReference type="GO" id="GO:0000810">
    <property type="term" value="F:diacylglycerol diphosphate phosphatase activity"/>
    <property type="evidence" value="ECO:0000250"/>
    <property type="project" value="UniProtKB"/>
</dbReference>
<dbReference type="GO" id="GO:0042802">
    <property type="term" value="F:identical protein binding"/>
    <property type="evidence" value="ECO:0007669"/>
    <property type="project" value="Ensembl"/>
</dbReference>
<dbReference type="GO" id="GO:0008195">
    <property type="term" value="F:phosphatidate phosphatase activity"/>
    <property type="evidence" value="ECO:0007669"/>
    <property type="project" value="UniProtKB-EC"/>
</dbReference>
<dbReference type="GO" id="GO:0001835">
    <property type="term" value="P:blastocyst hatching"/>
    <property type="evidence" value="ECO:0000315"/>
    <property type="project" value="MGI"/>
</dbReference>
<dbReference type="GO" id="GO:0046839">
    <property type="term" value="P:phospholipid dephosphorylation"/>
    <property type="evidence" value="ECO:0007669"/>
    <property type="project" value="Ensembl"/>
</dbReference>
<dbReference type="GO" id="GO:0006644">
    <property type="term" value="P:phospholipid metabolic process"/>
    <property type="evidence" value="ECO:0007669"/>
    <property type="project" value="UniProtKB-UniPathway"/>
</dbReference>
<dbReference type="GO" id="GO:0090279">
    <property type="term" value="P:regulation of calcium ion import"/>
    <property type="evidence" value="ECO:0000250"/>
    <property type="project" value="UniProtKB"/>
</dbReference>
<dbReference type="CDD" id="cd03390">
    <property type="entry name" value="PAP2_containing_1_like"/>
    <property type="match status" value="1"/>
</dbReference>
<dbReference type="FunFam" id="1.20.144.10:FF:000009">
    <property type="entry name" value="Phosphatidate phosphatase PPAPDC1A"/>
    <property type="match status" value="1"/>
</dbReference>
<dbReference type="Gene3D" id="1.20.144.10">
    <property type="entry name" value="Phosphatidic acid phosphatase type 2/haloperoxidase"/>
    <property type="match status" value="1"/>
</dbReference>
<dbReference type="InterPro" id="IPR036938">
    <property type="entry name" value="P_Acid_Pase_2/haloperoxi_sf"/>
</dbReference>
<dbReference type="InterPro" id="IPR000326">
    <property type="entry name" value="P_Acid_Pase_2/haloperoxidase"/>
</dbReference>
<dbReference type="InterPro" id="IPR043216">
    <property type="entry name" value="PA_PP_rel"/>
</dbReference>
<dbReference type="PANTHER" id="PTHR10165">
    <property type="entry name" value="LIPID PHOSPHATE PHOSPHATASE"/>
    <property type="match status" value="1"/>
</dbReference>
<dbReference type="PANTHER" id="PTHR10165:SF90">
    <property type="entry name" value="PHOSPHOLIPID PHOSPHATASE 4"/>
    <property type="match status" value="1"/>
</dbReference>
<dbReference type="Pfam" id="PF01569">
    <property type="entry name" value="PAP2"/>
    <property type="match status" value="1"/>
</dbReference>
<dbReference type="SMART" id="SM00014">
    <property type="entry name" value="acidPPc"/>
    <property type="match status" value="1"/>
</dbReference>
<dbReference type="SUPFAM" id="SSF48317">
    <property type="entry name" value="Acid phosphatase/Vanadium-dependent haloperoxidase"/>
    <property type="match status" value="1"/>
</dbReference>
<evidence type="ECO:0000250" key="1">
    <source>
        <dbReference type="UniProtKB" id="O34349"/>
    </source>
</evidence>
<evidence type="ECO:0000250" key="2">
    <source>
        <dbReference type="UniProtKB" id="Q5VZY2"/>
    </source>
</evidence>
<evidence type="ECO:0000255" key="3"/>
<evidence type="ECO:0000256" key="4">
    <source>
        <dbReference type="SAM" id="MobiDB-lite"/>
    </source>
</evidence>
<evidence type="ECO:0000305" key="5"/>
<evidence type="ECO:0000312" key="6">
    <source>
        <dbReference type="MGI" id="MGI:2685936"/>
    </source>
</evidence>
<name>PLPP4_MOUSE</name>
<comment type="function">
    <text evidence="2">Magnesium-independent phospholipid phosphatase with broad substrate specificity. Preferentially catalyzes the conversion of diacylglycerol pyrophosphate into phosphatidate but can also act on phosphatidate and lysophosphatidate. Phospholipid phosphatases are involved in both the synthesis of lipids and the degradation or generation of lipid-signaling molecules like diacylglycerol.</text>
</comment>
<comment type="catalytic activity">
    <reaction evidence="2">
        <text>a 1,2-diacyl-sn-glycerol 3-diphosphate + H2O = a 1,2-diacyl-sn-glycero-3-phosphate + phosphate + H(+)</text>
        <dbReference type="Rhea" id="RHEA:27449"/>
        <dbReference type="ChEBI" id="CHEBI:15377"/>
        <dbReference type="ChEBI" id="CHEBI:15378"/>
        <dbReference type="ChEBI" id="CHEBI:43474"/>
        <dbReference type="ChEBI" id="CHEBI:58608"/>
        <dbReference type="ChEBI" id="CHEBI:59996"/>
        <dbReference type="EC" id="3.6.1.75"/>
    </reaction>
    <physiologicalReaction direction="left-to-right" evidence="2">
        <dbReference type="Rhea" id="RHEA:27450"/>
    </physiologicalReaction>
</comment>
<comment type="catalytic activity">
    <reaction evidence="2">
        <text>a 1,2-diacyl-sn-glycero-3-phosphate + H2O = a 1,2-diacyl-sn-glycerol + phosphate</text>
        <dbReference type="Rhea" id="RHEA:27429"/>
        <dbReference type="ChEBI" id="CHEBI:15377"/>
        <dbReference type="ChEBI" id="CHEBI:17815"/>
        <dbReference type="ChEBI" id="CHEBI:43474"/>
        <dbReference type="ChEBI" id="CHEBI:58608"/>
        <dbReference type="EC" id="3.1.3.4"/>
    </reaction>
    <physiologicalReaction direction="left-to-right" evidence="2">
        <dbReference type="Rhea" id="RHEA:27430"/>
    </physiologicalReaction>
</comment>
<comment type="catalytic activity">
    <reaction evidence="2">
        <text>1,2-dioctanoyl-sn-glycero-3-diphosphate + H2O = 1,2-dioctanoyl-sn-glycero-3-phosphate + phosphate + H(+)</text>
        <dbReference type="Rhea" id="RHEA:42856"/>
        <dbReference type="ChEBI" id="CHEBI:15377"/>
        <dbReference type="ChEBI" id="CHEBI:15378"/>
        <dbReference type="ChEBI" id="CHEBI:43474"/>
        <dbReference type="ChEBI" id="CHEBI:78229"/>
        <dbReference type="ChEBI" id="CHEBI:82765"/>
    </reaction>
    <physiologicalReaction direction="left-to-right" evidence="2">
        <dbReference type="Rhea" id="RHEA:42857"/>
    </physiologicalReaction>
</comment>
<comment type="catalytic activity">
    <reaction evidence="2">
        <text>1,2-dioctanoyl-sn-glycero-3-phosphate + H2O = 1,2-dioctanoyl-sn-glycerol + phosphate</text>
        <dbReference type="Rhea" id="RHEA:42860"/>
        <dbReference type="ChEBI" id="CHEBI:15377"/>
        <dbReference type="ChEBI" id="CHEBI:43474"/>
        <dbReference type="ChEBI" id="CHEBI:76979"/>
        <dbReference type="ChEBI" id="CHEBI:78229"/>
    </reaction>
    <physiologicalReaction direction="left-to-right" evidence="2">
        <dbReference type="Rhea" id="RHEA:42861"/>
    </physiologicalReaction>
</comment>
<comment type="catalytic activity">
    <reaction evidence="2">
        <text>1-(9Z-octadecenoyl)-sn-glycero-3-phosphate + H2O = 1-(9Z-octadecenoyl)-sn-glycerol + phosphate</text>
        <dbReference type="Rhea" id="RHEA:39835"/>
        <dbReference type="ChEBI" id="CHEBI:15377"/>
        <dbReference type="ChEBI" id="CHEBI:43474"/>
        <dbReference type="ChEBI" id="CHEBI:74544"/>
        <dbReference type="ChEBI" id="CHEBI:75757"/>
    </reaction>
    <physiologicalReaction direction="left-to-right" evidence="2">
        <dbReference type="Rhea" id="RHEA:39836"/>
    </physiologicalReaction>
</comment>
<comment type="activity regulation">
    <text evidence="2">Magnesium-independent phospholipid phosphatase. Inhibited by N-ethylmaleimide.</text>
</comment>
<comment type="pathway">
    <text evidence="2">Lipid metabolism; phospholipid metabolism.</text>
</comment>
<comment type="subcellular location">
    <subcellularLocation>
        <location evidence="2">Membrane</location>
        <topology evidence="3">Multi-pass membrane protein</topology>
    </subcellularLocation>
</comment>
<comment type="similarity">
    <text evidence="5">Belongs to the PA-phosphatase related phosphoesterase family.</text>
</comment>
<sequence length="271" mass="30444">MRELAIEIGVRALLFGVFVFTEFLDPFQRVIQPEEIWLYKNPLVQSDNIPTRLMFAISFLTPLAVICVVKIIRRTDKTEIKEAFLAVSLALALNGVCTNTIKLIVGRPRPDFFYRCFPDGVMNSEMRCTGDPDLVSEGRKSFPSIHSSFAFSGLGFTTFYLAGKLHCFTESGRGKSWRLCAAILPLYCAMMIALSRMCDYKHHWQDSFVGGVIGLIFAYICYRQHYPPLANTACHKPYVSLRVPTSLKKEERPTADSAPSLPLEGITEGPV</sequence>